<proteinExistence type="evidence at protein level"/>
<sequence>MNPEQIKTALGSGLLSFPVTHFDAEGRFAADSYREHVEWLAGYKAPVLFAAGGTGEFFSLKPDEIPTIVAAAKEVAGETAIVSGCGYGTEIAVDIARSVEKVGADGILLLPHYLIDAPQEGLYAHIKKVCQSVGIGVMVYNRDNSVLQADTLARLCDECPNLVGFKDGTGDIGLVRQITAKMGDRLMYLGGMPTAELFAEAYLGAGFTTYSSAVFNFVPGLANEFYAALRAGERATCERILVDFFYPFMAIRNRAKGYAVSAVKAGVRLQGFNAGPVRAPLKDLTNEEIGMLEALIGTHKRKA</sequence>
<feature type="chain" id="PRO_0000103229" description="Probable 5-dehydro-4-deoxyglucarate dehydratase">
    <location>
        <begin position="1"/>
        <end position="303"/>
    </location>
</feature>
<feature type="helix" evidence="3">
    <location>
        <begin position="3"/>
        <end position="10"/>
    </location>
</feature>
<feature type="helix" evidence="3">
    <location>
        <begin position="30"/>
        <end position="41"/>
    </location>
</feature>
<feature type="turn" evidence="2">
    <location>
        <begin position="42"/>
        <end position="44"/>
    </location>
</feature>
<feature type="strand" evidence="3">
    <location>
        <begin position="46"/>
        <end position="50"/>
    </location>
</feature>
<feature type="turn" evidence="3">
    <location>
        <begin position="53"/>
        <end position="56"/>
    </location>
</feature>
<feature type="helix" evidence="3">
    <location>
        <begin position="57"/>
        <end position="59"/>
    </location>
</feature>
<feature type="helix" evidence="3">
    <location>
        <begin position="64"/>
        <end position="75"/>
    </location>
</feature>
<feature type="strand" evidence="3">
    <location>
        <begin position="80"/>
        <end position="85"/>
    </location>
</feature>
<feature type="helix" evidence="3">
    <location>
        <begin position="89"/>
        <end position="101"/>
    </location>
</feature>
<feature type="strand" evidence="3">
    <location>
        <begin position="105"/>
        <end position="109"/>
    </location>
</feature>
<feature type="helix" evidence="3">
    <location>
        <begin position="119"/>
        <end position="131"/>
    </location>
</feature>
<feature type="strand" evidence="3">
    <location>
        <begin position="134"/>
        <end position="142"/>
    </location>
</feature>
<feature type="helix" evidence="3">
    <location>
        <begin position="149"/>
        <end position="158"/>
    </location>
</feature>
<feature type="strand" evidence="3">
    <location>
        <begin position="162"/>
        <end position="167"/>
    </location>
</feature>
<feature type="helix" evidence="3">
    <location>
        <begin position="172"/>
        <end position="182"/>
    </location>
</feature>
<feature type="helix" evidence="3">
    <location>
        <begin position="183"/>
        <end position="185"/>
    </location>
</feature>
<feature type="strand" evidence="3">
    <location>
        <begin position="186"/>
        <end position="190"/>
    </location>
</feature>
<feature type="helix" evidence="3">
    <location>
        <begin position="195"/>
        <end position="197"/>
    </location>
</feature>
<feature type="helix" evidence="3">
    <location>
        <begin position="199"/>
        <end position="205"/>
    </location>
</feature>
<feature type="strand" evidence="3">
    <location>
        <begin position="209"/>
        <end position="211"/>
    </location>
</feature>
<feature type="helix" evidence="3">
    <location>
        <begin position="213"/>
        <end position="216"/>
    </location>
</feature>
<feature type="helix" evidence="3">
    <location>
        <begin position="219"/>
        <end position="231"/>
    </location>
</feature>
<feature type="helix" evidence="3">
    <location>
        <begin position="234"/>
        <end position="243"/>
    </location>
</feature>
<feature type="helix" evidence="3">
    <location>
        <begin position="245"/>
        <end position="252"/>
    </location>
</feature>
<feature type="helix" evidence="3">
    <location>
        <begin position="258"/>
        <end position="269"/>
    </location>
</feature>
<feature type="helix" evidence="3">
    <location>
        <begin position="286"/>
        <end position="296"/>
    </location>
</feature>
<feature type="helix" evidence="3">
    <location>
        <begin position="297"/>
        <end position="299"/>
    </location>
</feature>
<organism>
    <name type="scientific">Agrobacterium fabrum (strain C58 / ATCC 33970)</name>
    <name type="common">Agrobacterium tumefaciens (strain C58)</name>
    <dbReference type="NCBI Taxonomy" id="176299"/>
    <lineage>
        <taxon>Bacteria</taxon>
        <taxon>Pseudomonadati</taxon>
        <taxon>Pseudomonadota</taxon>
        <taxon>Alphaproteobacteria</taxon>
        <taxon>Hyphomicrobiales</taxon>
        <taxon>Rhizobiaceae</taxon>
        <taxon>Rhizobium/Agrobacterium group</taxon>
        <taxon>Agrobacterium</taxon>
        <taxon>Agrobacterium tumefaciens complex</taxon>
    </lineage>
</organism>
<evidence type="ECO:0000255" key="1">
    <source>
        <dbReference type="HAMAP-Rule" id="MF_00694"/>
    </source>
</evidence>
<evidence type="ECO:0007829" key="2">
    <source>
        <dbReference type="PDB" id="5HWJ"/>
    </source>
</evidence>
<evidence type="ECO:0007829" key="3">
    <source>
        <dbReference type="PDB" id="5HWN"/>
    </source>
</evidence>
<accession>Q8UB77</accession>
<name>KDGD_AGRFC</name>
<keyword id="KW-0002">3D-structure</keyword>
<keyword id="KW-0456">Lyase</keyword>
<keyword id="KW-1185">Reference proteome</keyword>
<reference key="1">
    <citation type="journal article" date="2001" name="Science">
        <title>The genome of the natural genetic engineer Agrobacterium tumefaciens C58.</title>
        <authorList>
            <person name="Wood D.W."/>
            <person name="Setubal J.C."/>
            <person name="Kaul R."/>
            <person name="Monks D.E."/>
            <person name="Kitajima J.P."/>
            <person name="Okura V.K."/>
            <person name="Zhou Y."/>
            <person name="Chen L."/>
            <person name="Wood G.E."/>
            <person name="Almeida N.F. Jr."/>
            <person name="Woo L."/>
            <person name="Chen Y."/>
            <person name="Paulsen I.T."/>
            <person name="Eisen J.A."/>
            <person name="Karp P.D."/>
            <person name="Bovee D. Sr."/>
            <person name="Chapman P."/>
            <person name="Clendenning J."/>
            <person name="Deatherage G."/>
            <person name="Gillet W."/>
            <person name="Grant C."/>
            <person name="Kutyavin T."/>
            <person name="Levy R."/>
            <person name="Li M.-J."/>
            <person name="McClelland E."/>
            <person name="Palmieri A."/>
            <person name="Raymond C."/>
            <person name="Rouse G."/>
            <person name="Saenphimmachak C."/>
            <person name="Wu Z."/>
            <person name="Romero P."/>
            <person name="Gordon D."/>
            <person name="Zhang S."/>
            <person name="Yoo H."/>
            <person name="Tao Y."/>
            <person name="Biddle P."/>
            <person name="Jung M."/>
            <person name="Krespan W."/>
            <person name="Perry M."/>
            <person name="Gordon-Kamm B."/>
            <person name="Liao L."/>
            <person name="Kim S."/>
            <person name="Hendrick C."/>
            <person name="Zhao Z.-Y."/>
            <person name="Dolan M."/>
            <person name="Chumley F."/>
            <person name="Tingey S.V."/>
            <person name="Tomb J.-F."/>
            <person name="Gordon M.P."/>
            <person name="Olson M.V."/>
            <person name="Nester E.W."/>
        </authorList>
    </citation>
    <scope>NUCLEOTIDE SEQUENCE [LARGE SCALE GENOMIC DNA]</scope>
    <source>
        <strain>C58 / ATCC 33970</strain>
    </source>
</reference>
<reference key="2">
    <citation type="journal article" date="2001" name="Science">
        <title>Genome sequence of the plant pathogen and biotechnology agent Agrobacterium tumefaciens C58.</title>
        <authorList>
            <person name="Goodner B."/>
            <person name="Hinkle G."/>
            <person name="Gattung S."/>
            <person name="Miller N."/>
            <person name="Blanchard M."/>
            <person name="Qurollo B."/>
            <person name="Goldman B.S."/>
            <person name="Cao Y."/>
            <person name="Askenazi M."/>
            <person name="Halling C."/>
            <person name="Mullin L."/>
            <person name="Houmiel K."/>
            <person name="Gordon J."/>
            <person name="Vaudin M."/>
            <person name="Iartchouk O."/>
            <person name="Epp A."/>
            <person name="Liu F."/>
            <person name="Wollam C."/>
            <person name="Allinger M."/>
            <person name="Doughty D."/>
            <person name="Scott C."/>
            <person name="Lappas C."/>
            <person name="Markelz B."/>
            <person name="Flanagan C."/>
            <person name="Crowell C."/>
            <person name="Gurson J."/>
            <person name="Lomo C."/>
            <person name="Sear C."/>
            <person name="Strub G."/>
            <person name="Cielo C."/>
            <person name="Slater S."/>
        </authorList>
    </citation>
    <scope>NUCLEOTIDE SEQUENCE [LARGE SCALE GENOMIC DNA]</scope>
    <source>
        <strain>C58 / ATCC 33970</strain>
    </source>
</reference>
<gene>
    <name type="ordered locus">Atu3140</name>
    <name type="ORF">AGR_L_3338</name>
</gene>
<dbReference type="EC" id="4.2.1.41" evidence="1"/>
<dbReference type="EMBL" id="AE007870">
    <property type="protein sequence ID" value="AAK90246.2"/>
    <property type="molecule type" value="Genomic_DNA"/>
</dbReference>
<dbReference type="PIR" id="AF2942">
    <property type="entry name" value="AF2942"/>
</dbReference>
<dbReference type="PIR" id="D98340">
    <property type="entry name" value="D98340"/>
</dbReference>
<dbReference type="RefSeq" id="NP_357461.2">
    <property type="nucleotide sequence ID" value="NC_003063.2"/>
</dbReference>
<dbReference type="RefSeq" id="WP_010972790.1">
    <property type="nucleotide sequence ID" value="NC_003063.2"/>
</dbReference>
<dbReference type="PDB" id="4UR7">
    <property type="method" value="X-ray"/>
    <property type="resolution" value="1.50 A"/>
    <property type="chains" value="A/B/C/D=3-303"/>
</dbReference>
<dbReference type="PDB" id="4UR8">
    <property type="method" value="X-ray"/>
    <property type="resolution" value="2.10 A"/>
    <property type="chains" value="A/B/C/D=3-303"/>
</dbReference>
<dbReference type="PDB" id="5HWJ">
    <property type="method" value="X-ray"/>
    <property type="resolution" value="1.65 A"/>
    <property type="chains" value="A/B/C/D=1-303"/>
</dbReference>
<dbReference type="PDB" id="5HWM">
    <property type="method" value="X-ray"/>
    <property type="resolution" value="2.10 A"/>
    <property type="chains" value="A/B/C/D=1-303"/>
</dbReference>
<dbReference type="PDB" id="5HWN">
    <property type="method" value="X-ray"/>
    <property type="resolution" value="1.50 A"/>
    <property type="chains" value="A/B/C/D=1-303"/>
</dbReference>
<dbReference type="PDBsum" id="4UR7"/>
<dbReference type="PDBsum" id="4UR8"/>
<dbReference type="PDBsum" id="5HWJ"/>
<dbReference type="PDBsum" id="5HWM"/>
<dbReference type="PDBsum" id="5HWN"/>
<dbReference type="SMR" id="Q8UB77"/>
<dbReference type="STRING" id="176299.Atu3140"/>
<dbReference type="EnsemblBacteria" id="AAK90246">
    <property type="protein sequence ID" value="AAK90246"/>
    <property type="gene ID" value="Atu3140"/>
</dbReference>
<dbReference type="GeneID" id="1134942"/>
<dbReference type="KEGG" id="atu:Atu3140"/>
<dbReference type="PATRIC" id="fig|176299.10.peg.2985"/>
<dbReference type="eggNOG" id="COG0329">
    <property type="taxonomic scope" value="Bacteria"/>
</dbReference>
<dbReference type="HOGENOM" id="CLU_049343_5_2_5"/>
<dbReference type="OrthoDB" id="8995637at2"/>
<dbReference type="PhylomeDB" id="Q8UB77"/>
<dbReference type="BRENDA" id="4.2.1.41">
    <property type="organism ID" value="14964"/>
</dbReference>
<dbReference type="UniPathway" id="UPA00564">
    <property type="reaction ID" value="UER00628"/>
</dbReference>
<dbReference type="EvolutionaryTrace" id="Q8UB77"/>
<dbReference type="Proteomes" id="UP000000813">
    <property type="component" value="Chromosome linear"/>
</dbReference>
<dbReference type="GO" id="GO:0008840">
    <property type="term" value="F:4-hydroxy-tetrahydrodipicolinate synthase activity"/>
    <property type="evidence" value="ECO:0007669"/>
    <property type="project" value="TreeGrafter"/>
</dbReference>
<dbReference type="GO" id="GO:0047448">
    <property type="term" value="F:5-dehydro-4-deoxyglucarate dehydratase activity"/>
    <property type="evidence" value="ECO:0007669"/>
    <property type="project" value="UniProtKB-UniRule"/>
</dbReference>
<dbReference type="GO" id="GO:0042838">
    <property type="term" value="P:D-glucarate catabolic process"/>
    <property type="evidence" value="ECO:0007669"/>
    <property type="project" value="UniProtKB-UniRule"/>
</dbReference>
<dbReference type="CDD" id="cd00951">
    <property type="entry name" value="KDGDH"/>
    <property type="match status" value="1"/>
</dbReference>
<dbReference type="Gene3D" id="3.20.20.70">
    <property type="entry name" value="Aldolase class I"/>
    <property type="match status" value="1"/>
</dbReference>
<dbReference type="HAMAP" id="MF_00694">
    <property type="entry name" value="KDGDH"/>
    <property type="match status" value="1"/>
</dbReference>
<dbReference type="InterPro" id="IPR013785">
    <property type="entry name" value="Aldolase_TIM"/>
</dbReference>
<dbReference type="InterPro" id="IPR002220">
    <property type="entry name" value="DapA-like"/>
</dbReference>
<dbReference type="InterPro" id="IPR017655">
    <property type="entry name" value="Dehydro-deoxyglucarate_dehyd"/>
</dbReference>
<dbReference type="NCBIfam" id="TIGR03249">
    <property type="entry name" value="KdgD"/>
    <property type="match status" value="1"/>
</dbReference>
<dbReference type="NCBIfam" id="NF002958">
    <property type="entry name" value="PRK03620.1"/>
    <property type="match status" value="1"/>
</dbReference>
<dbReference type="PANTHER" id="PTHR12128:SF19">
    <property type="entry name" value="5-DEHYDRO-4-DEOXYGLUCARATE DEHYDRATASE 2-RELATED"/>
    <property type="match status" value="1"/>
</dbReference>
<dbReference type="PANTHER" id="PTHR12128">
    <property type="entry name" value="DIHYDRODIPICOLINATE SYNTHASE"/>
    <property type="match status" value="1"/>
</dbReference>
<dbReference type="Pfam" id="PF00701">
    <property type="entry name" value="DHDPS"/>
    <property type="match status" value="1"/>
</dbReference>
<dbReference type="PIRSF" id="PIRSF001365">
    <property type="entry name" value="DHDPS"/>
    <property type="match status" value="1"/>
</dbReference>
<dbReference type="SMART" id="SM01130">
    <property type="entry name" value="DHDPS"/>
    <property type="match status" value="1"/>
</dbReference>
<dbReference type="SUPFAM" id="SSF51569">
    <property type="entry name" value="Aldolase"/>
    <property type="match status" value="1"/>
</dbReference>
<protein>
    <recommendedName>
        <fullName evidence="1">Probable 5-dehydro-4-deoxyglucarate dehydratase</fullName>
        <ecNumber evidence="1">4.2.1.41</ecNumber>
    </recommendedName>
    <alternativeName>
        <fullName evidence="1">5-keto-4-deoxy-glucarate dehydratase</fullName>
        <shortName evidence="1">KDGDH</shortName>
    </alternativeName>
</protein>
<comment type="catalytic activity">
    <reaction evidence="1">
        <text>5-dehydro-4-deoxy-D-glucarate + H(+) = 2,5-dioxopentanoate + CO2 + H2O</text>
        <dbReference type="Rhea" id="RHEA:24608"/>
        <dbReference type="ChEBI" id="CHEBI:15377"/>
        <dbReference type="ChEBI" id="CHEBI:15378"/>
        <dbReference type="ChEBI" id="CHEBI:16526"/>
        <dbReference type="ChEBI" id="CHEBI:42819"/>
        <dbReference type="ChEBI" id="CHEBI:58136"/>
        <dbReference type="EC" id="4.2.1.41"/>
    </reaction>
</comment>
<comment type="pathway">
    <text evidence="1">Carbohydrate acid metabolism; D-glucarate degradation; 2,5-dioxopentanoate from D-glucarate: step 2/2.</text>
</comment>
<comment type="similarity">
    <text evidence="1">Belongs to the DapA family.</text>
</comment>